<keyword id="KW-0025">Alternative splicing</keyword>
<keyword id="KW-0156">Chromatin regulator</keyword>
<keyword id="KW-0158">Chromosome</keyword>
<keyword id="KW-0479">Metal-binding</keyword>
<keyword id="KW-0489">Methyltransferase</keyword>
<keyword id="KW-0539">Nucleus</keyword>
<keyword id="KW-1185">Reference proteome</keyword>
<keyword id="KW-0949">S-adenosyl-L-methionine</keyword>
<keyword id="KW-0808">Transferase</keyword>
<keyword id="KW-0862">Zinc</keyword>
<name>SUVR3_ARATH</name>
<gene>
    <name type="primary">SUVR3</name>
    <name type="synonym">SDG20</name>
    <name type="synonym">SET20</name>
    <name type="ordered locus">At3g03750</name>
    <name type="ORF">F20H23.22</name>
</gene>
<feature type="chain" id="PRO_0000233367" description="Histone-lysine N-methyltransferase SUVR3">
    <location>
        <begin position="1"/>
        <end position="354"/>
    </location>
</feature>
<feature type="domain" description="Pre-SET">
    <location>
        <begin position="143"/>
        <end position="188"/>
    </location>
</feature>
<feature type="domain" description="SET" evidence="4">
    <location>
        <begin position="191"/>
        <end position="323"/>
    </location>
</feature>
<feature type="domain" description="Post-SET" evidence="3">
    <location>
        <begin position="334"/>
        <end position="350"/>
    </location>
</feature>
<feature type="binding site" evidence="2">
    <location>
        <position position="145"/>
    </location>
    <ligand>
        <name>Zn(2+)</name>
        <dbReference type="ChEBI" id="CHEBI:29105"/>
        <label>1</label>
    </ligand>
</feature>
<feature type="binding site" evidence="2">
    <location>
        <position position="145"/>
    </location>
    <ligand>
        <name>Zn(2+)</name>
        <dbReference type="ChEBI" id="CHEBI:29105"/>
        <label>2</label>
    </ligand>
</feature>
<feature type="binding site" evidence="2">
    <location>
        <position position="147"/>
    </location>
    <ligand>
        <name>Zn(2+)</name>
        <dbReference type="ChEBI" id="CHEBI:29105"/>
        <label>1</label>
    </ligand>
</feature>
<feature type="binding site" evidence="2">
    <location>
        <position position="150"/>
    </location>
    <ligand>
        <name>Zn(2+)</name>
        <dbReference type="ChEBI" id="CHEBI:29105"/>
        <label>1</label>
    </ligand>
</feature>
<feature type="binding site" evidence="2">
    <location>
        <position position="150"/>
    </location>
    <ligand>
        <name>Zn(2+)</name>
        <dbReference type="ChEBI" id="CHEBI:29105"/>
        <label>3</label>
    </ligand>
</feature>
<feature type="binding site" evidence="2">
    <location>
        <position position="155"/>
    </location>
    <ligand>
        <name>Zn(2+)</name>
        <dbReference type="ChEBI" id="CHEBI:29105"/>
        <label>1</label>
    </ligand>
</feature>
<feature type="binding site" evidence="2">
    <location>
        <position position="157"/>
    </location>
    <ligand>
        <name>Zn(2+)</name>
        <dbReference type="ChEBI" id="CHEBI:29105"/>
        <label>2</label>
    </ligand>
</feature>
<feature type="binding site" evidence="2">
    <location>
        <position position="170"/>
    </location>
    <ligand>
        <name>Zn(2+)</name>
        <dbReference type="ChEBI" id="CHEBI:29105"/>
        <label>2</label>
    </ligand>
</feature>
<feature type="binding site" evidence="2">
    <location>
        <position position="170"/>
    </location>
    <ligand>
        <name>Zn(2+)</name>
        <dbReference type="ChEBI" id="CHEBI:29105"/>
        <label>3</label>
    </ligand>
</feature>
<feature type="binding site" evidence="2">
    <location>
        <position position="174"/>
    </location>
    <ligand>
        <name>Zn(2+)</name>
        <dbReference type="ChEBI" id="CHEBI:29105"/>
        <label>2</label>
    </ligand>
</feature>
<feature type="binding site" evidence="2">
    <location>
        <position position="176"/>
    </location>
    <ligand>
        <name>Zn(2+)</name>
        <dbReference type="ChEBI" id="CHEBI:29105"/>
        <label>3</label>
    </ligand>
</feature>
<feature type="binding site" evidence="2">
    <location>
        <position position="180"/>
    </location>
    <ligand>
        <name>Zn(2+)</name>
        <dbReference type="ChEBI" id="CHEBI:29105"/>
        <label>3</label>
    </ligand>
</feature>
<feature type="binding site" evidence="2">
    <location>
        <begin position="201"/>
        <end position="203"/>
    </location>
    <ligand>
        <name>S-adenosyl-L-methionine</name>
        <dbReference type="ChEBI" id="CHEBI:59789"/>
    </ligand>
</feature>
<feature type="binding site" evidence="2">
    <location>
        <begin position="281"/>
        <end position="282"/>
    </location>
    <ligand>
        <name>S-adenosyl-L-methionine</name>
        <dbReference type="ChEBI" id="CHEBI:59789"/>
    </ligand>
</feature>
<feature type="binding site" evidence="2">
    <location>
        <position position="284"/>
    </location>
    <ligand>
        <name>Zn(2+)</name>
        <dbReference type="ChEBI" id="CHEBI:29105"/>
        <label>4</label>
    </ligand>
</feature>
<feature type="binding site" evidence="4">
    <location>
        <position position="322"/>
    </location>
    <ligand>
        <name>S-adenosyl-L-methionine</name>
        <dbReference type="ChEBI" id="CHEBI:59789"/>
    </ligand>
</feature>
<feature type="binding site" evidence="2">
    <location>
        <position position="338"/>
    </location>
    <ligand>
        <name>Zn(2+)</name>
        <dbReference type="ChEBI" id="CHEBI:29105"/>
        <label>4</label>
    </ligand>
</feature>
<feature type="binding site" evidence="2">
    <location>
        <position position="340"/>
    </location>
    <ligand>
        <name>Zn(2+)</name>
        <dbReference type="ChEBI" id="CHEBI:29105"/>
        <label>4</label>
    </ligand>
</feature>
<feature type="binding site" evidence="2">
    <location>
        <position position="345"/>
    </location>
    <ligand>
        <name>Zn(2+)</name>
        <dbReference type="ChEBI" id="CHEBI:29105"/>
        <label>4</label>
    </ligand>
</feature>
<feature type="splice variant" id="VSP_058013" description="In isoform 2.">
    <location>
        <begin position="214"/>
        <end position="229"/>
    </location>
</feature>
<comment type="function">
    <text evidence="1">Histone methyltransferase.</text>
</comment>
<comment type="catalytic activity">
    <reaction>
        <text>L-lysyl-[histone] + S-adenosyl-L-methionine = N(6)-methyl-L-lysyl-[histone] + S-adenosyl-L-homocysteine + H(+)</text>
        <dbReference type="Rhea" id="RHEA:10024"/>
        <dbReference type="Rhea" id="RHEA-COMP:9845"/>
        <dbReference type="Rhea" id="RHEA-COMP:9846"/>
        <dbReference type="ChEBI" id="CHEBI:15378"/>
        <dbReference type="ChEBI" id="CHEBI:29969"/>
        <dbReference type="ChEBI" id="CHEBI:57856"/>
        <dbReference type="ChEBI" id="CHEBI:59789"/>
        <dbReference type="ChEBI" id="CHEBI:61929"/>
    </reaction>
</comment>
<comment type="subcellular location">
    <subcellularLocation>
        <location evidence="1">Nucleus</location>
    </subcellularLocation>
    <subcellularLocation>
        <location evidence="1">Chromosome</location>
    </subcellularLocation>
    <text evidence="1">Associates with euchromatic regions.</text>
</comment>
<comment type="alternative products">
    <event type="alternative splicing"/>
    <isoform>
        <id>Q9SRV2-1</id>
        <name>1</name>
        <sequence type="displayed"/>
    </isoform>
    <isoform>
        <id>Q9SRV2-2</id>
        <name>2</name>
        <sequence type="described" ref="VSP_058013"/>
    </isoform>
</comment>
<comment type="domain">
    <text evidence="1">In the pre-SET domain, Cys residues bind 3 zinc ions that are arranged in a triangular cluster; some of these Cys residues contribute to the binding of two zinc ions within the cluster.</text>
</comment>
<comment type="similarity">
    <text evidence="4">Belongs to the class V-like SAM-binding methyltransferase superfamily.</text>
</comment>
<dbReference type="EC" id="2.1.1.-"/>
<dbReference type="EMBL" id="AC009540">
    <property type="protein sequence ID" value="AAF00642.1"/>
    <property type="molecule type" value="Genomic_DNA"/>
</dbReference>
<dbReference type="EMBL" id="CP002686">
    <property type="protein sequence ID" value="AEE73981.1"/>
    <property type="molecule type" value="Genomic_DNA"/>
</dbReference>
<dbReference type="EMBL" id="CP002686">
    <property type="protein sequence ID" value="AEE73982.1"/>
    <property type="molecule type" value="Genomic_DNA"/>
</dbReference>
<dbReference type="EMBL" id="BT008766">
    <property type="protein sequence ID" value="AAP68205.1"/>
    <property type="molecule type" value="mRNA"/>
</dbReference>
<dbReference type="EMBL" id="AK227335">
    <property type="protein sequence ID" value="BAE99347.1"/>
    <property type="molecule type" value="mRNA"/>
</dbReference>
<dbReference type="EMBL" id="AB493599">
    <property type="protein sequence ID" value="BAH30437.1"/>
    <property type="molecule type" value="mRNA"/>
</dbReference>
<dbReference type="RefSeq" id="NP_187025.2">
    <molecule id="Q9SRV2-2"/>
    <property type="nucleotide sequence ID" value="NM_111246.3"/>
</dbReference>
<dbReference type="RefSeq" id="NP_974212.1">
    <molecule id="Q9SRV2-1"/>
    <property type="nucleotide sequence ID" value="NM_202483.2"/>
</dbReference>
<dbReference type="SMR" id="Q9SRV2"/>
<dbReference type="BioGRID" id="6502">
    <property type="interactions" value="8"/>
</dbReference>
<dbReference type="FunCoup" id="Q9SRV2">
    <property type="interactions" value="1379"/>
</dbReference>
<dbReference type="IntAct" id="Q9SRV2">
    <property type="interactions" value="9"/>
</dbReference>
<dbReference type="STRING" id="3702.Q9SRV2"/>
<dbReference type="iPTMnet" id="Q9SRV2"/>
<dbReference type="PaxDb" id="3702-AT3G03750.2"/>
<dbReference type="ProteomicsDB" id="226529">
    <molecule id="Q9SRV2-1"/>
</dbReference>
<dbReference type="EnsemblPlants" id="AT3G03750.1">
    <molecule id="Q9SRV2-2"/>
    <property type="protein sequence ID" value="AT3G03750.1"/>
    <property type="gene ID" value="AT3G03750"/>
</dbReference>
<dbReference type="EnsemblPlants" id="AT3G03750.2">
    <molecule id="Q9SRV2-1"/>
    <property type="protein sequence ID" value="AT3G03750.2"/>
    <property type="gene ID" value="AT3G03750"/>
</dbReference>
<dbReference type="GeneID" id="821169"/>
<dbReference type="Gramene" id="AT3G03750.1">
    <molecule id="Q9SRV2-2"/>
    <property type="protein sequence ID" value="AT3G03750.1"/>
    <property type="gene ID" value="AT3G03750"/>
</dbReference>
<dbReference type="Gramene" id="AT3G03750.2">
    <molecule id="Q9SRV2-1"/>
    <property type="protein sequence ID" value="AT3G03750.2"/>
    <property type="gene ID" value="AT3G03750"/>
</dbReference>
<dbReference type="KEGG" id="ath:AT3G03750"/>
<dbReference type="Araport" id="AT3G03750"/>
<dbReference type="TAIR" id="AT3G03750">
    <property type="gene designation" value="SDG20"/>
</dbReference>
<dbReference type="eggNOG" id="KOG1082">
    <property type="taxonomic scope" value="Eukaryota"/>
</dbReference>
<dbReference type="InParanoid" id="Q9SRV2"/>
<dbReference type="OMA" id="GLECENR"/>
<dbReference type="OrthoDB" id="5792673at2759"/>
<dbReference type="PRO" id="PR:Q9SRV2"/>
<dbReference type="Proteomes" id="UP000006548">
    <property type="component" value="Chromosome 3"/>
</dbReference>
<dbReference type="ExpressionAtlas" id="Q9SRV2">
    <property type="expression patterns" value="baseline and differential"/>
</dbReference>
<dbReference type="GO" id="GO:0005694">
    <property type="term" value="C:chromosome"/>
    <property type="evidence" value="ECO:0007669"/>
    <property type="project" value="UniProtKB-SubCell"/>
</dbReference>
<dbReference type="GO" id="GO:0005634">
    <property type="term" value="C:nucleus"/>
    <property type="evidence" value="ECO:0007669"/>
    <property type="project" value="UniProtKB-SubCell"/>
</dbReference>
<dbReference type="GO" id="GO:0042054">
    <property type="term" value="F:histone methyltransferase activity"/>
    <property type="evidence" value="ECO:0007669"/>
    <property type="project" value="InterPro"/>
</dbReference>
<dbReference type="GO" id="GO:0046872">
    <property type="term" value="F:metal ion binding"/>
    <property type="evidence" value="ECO:0007669"/>
    <property type="project" value="UniProtKB-KW"/>
</dbReference>
<dbReference type="GO" id="GO:0032259">
    <property type="term" value="P:methylation"/>
    <property type="evidence" value="ECO:0007669"/>
    <property type="project" value="UniProtKB-KW"/>
</dbReference>
<dbReference type="Gene3D" id="2.170.270.10">
    <property type="entry name" value="SET domain"/>
    <property type="match status" value="1"/>
</dbReference>
<dbReference type="InterPro" id="IPR006560">
    <property type="entry name" value="AWS_dom"/>
</dbReference>
<dbReference type="InterPro" id="IPR050973">
    <property type="entry name" value="H3K9_Histone-Lys_N-MTase"/>
</dbReference>
<dbReference type="InterPro" id="IPR003616">
    <property type="entry name" value="Post-SET_dom"/>
</dbReference>
<dbReference type="InterPro" id="IPR001214">
    <property type="entry name" value="SET_dom"/>
</dbReference>
<dbReference type="InterPro" id="IPR046341">
    <property type="entry name" value="SET_dom_sf"/>
</dbReference>
<dbReference type="PANTHER" id="PTHR46223:SF3">
    <property type="entry name" value="HISTONE-LYSINE N-METHYLTRANSFERASE SET-23"/>
    <property type="match status" value="1"/>
</dbReference>
<dbReference type="PANTHER" id="PTHR46223">
    <property type="entry name" value="HISTONE-LYSINE N-METHYLTRANSFERASE SUV39H"/>
    <property type="match status" value="1"/>
</dbReference>
<dbReference type="Pfam" id="PF00856">
    <property type="entry name" value="SET"/>
    <property type="match status" value="1"/>
</dbReference>
<dbReference type="SMART" id="SM00570">
    <property type="entry name" value="AWS"/>
    <property type="match status" value="1"/>
</dbReference>
<dbReference type="SMART" id="SM00317">
    <property type="entry name" value="SET"/>
    <property type="match status" value="1"/>
</dbReference>
<dbReference type="SUPFAM" id="SSF82199">
    <property type="entry name" value="SET domain"/>
    <property type="match status" value="1"/>
</dbReference>
<dbReference type="PROSITE" id="PS50868">
    <property type="entry name" value="POST_SET"/>
    <property type="match status" value="1"/>
</dbReference>
<dbReference type="PROSITE" id="PS50280">
    <property type="entry name" value="SET"/>
    <property type="match status" value="1"/>
</dbReference>
<proteinExistence type="evidence at transcript level"/>
<organism>
    <name type="scientific">Arabidopsis thaliana</name>
    <name type="common">Mouse-ear cress</name>
    <dbReference type="NCBI Taxonomy" id="3702"/>
    <lineage>
        <taxon>Eukaryota</taxon>
        <taxon>Viridiplantae</taxon>
        <taxon>Streptophyta</taxon>
        <taxon>Embryophyta</taxon>
        <taxon>Tracheophyta</taxon>
        <taxon>Spermatophyta</taxon>
        <taxon>Magnoliopsida</taxon>
        <taxon>eudicotyledons</taxon>
        <taxon>Gunneridae</taxon>
        <taxon>Pentapetalae</taxon>
        <taxon>rosids</taxon>
        <taxon>malvids</taxon>
        <taxon>Brassicales</taxon>
        <taxon>Brassicaceae</taxon>
        <taxon>Camelineae</taxon>
        <taxon>Arabidopsis</taxon>
    </lineage>
</organism>
<evidence type="ECO:0000250" key="1"/>
<evidence type="ECO:0000250" key="2">
    <source>
        <dbReference type="UniProtKB" id="Q9H5I1"/>
    </source>
</evidence>
<evidence type="ECO:0000255" key="3">
    <source>
        <dbReference type="PROSITE-ProRule" id="PRU00155"/>
    </source>
</evidence>
<evidence type="ECO:0000255" key="4">
    <source>
        <dbReference type="PROSITE-ProRule" id="PRU00190"/>
    </source>
</evidence>
<reference key="1">
    <citation type="journal article" date="2000" name="Nature">
        <title>Sequence and analysis of chromosome 3 of the plant Arabidopsis thaliana.</title>
        <authorList>
            <person name="Salanoubat M."/>
            <person name="Lemcke K."/>
            <person name="Rieger M."/>
            <person name="Ansorge W."/>
            <person name="Unseld M."/>
            <person name="Fartmann B."/>
            <person name="Valle G."/>
            <person name="Bloecker H."/>
            <person name="Perez-Alonso M."/>
            <person name="Obermaier B."/>
            <person name="Delseny M."/>
            <person name="Boutry M."/>
            <person name="Grivell L.A."/>
            <person name="Mache R."/>
            <person name="Puigdomenech P."/>
            <person name="De Simone V."/>
            <person name="Choisne N."/>
            <person name="Artiguenave F."/>
            <person name="Robert C."/>
            <person name="Brottier P."/>
            <person name="Wincker P."/>
            <person name="Cattolico L."/>
            <person name="Weissenbach J."/>
            <person name="Saurin W."/>
            <person name="Quetier F."/>
            <person name="Schaefer M."/>
            <person name="Mueller-Auer S."/>
            <person name="Gabel C."/>
            <person name="Fuchs M."/>
            <person name="Benes V."/>
            <person name="Wurmbach E."/>
            <person name="Drzonek H."/>
            <person name="Erfle H."/>
            <person name="Jordan N."/>
            <person name="Bangert S."/>
            <person name="Wiedelmann R."/>
            <person name="Kranz H."/>
            <person name="Voss H."/>
            <person name="Holland R."/>
            <person name="Brandt P."/>
            <person name="Nyakatura G."/>
            <person name="Vezzi A."/>
            <person name="D'Angelo M."/>
            <person name="Pallavicini A."/>
            <person name="Toppo S."/>
            <person name="Simionati B."/>
            <person name="Conrad A."/>
            <person name="Hornischer K."/>
            <person name="Kauer G."/>
            <person name="Loehnert T.-H."/>
            <person name="Nordsiek G."/>
            <person name="Reichelt J."/>
            <person name="Scharfe M."/>
            <person name="Schoen O."/>
            <person name="Bargues M."/>
            <person name="Terol J."/>
            <person name="Climent J."/>
            <person name="Navarro P."/>
            <person name="Collado C."/>
            <person name="Perez-Perez A."/>
            <person name="Ottenwaelder B."/>
            <person name="Duchemin D."/>
            <person name="Cooke R."/>
            <person name="Laudie M."/>
            <person name="Berger-Llauro C."/>
            <person name="Purnelle B."/>
            <person name="Masuy D."/>
            <person name="de Haan M."/>
            <person name="Maarse A.C."/>
            <person name="Alcaraz J.-P."/>
            <person name="Cottet A."/>
            <person name="Casacuberta E."/>
            <person name="Monfort A."/>
            <person name="Argiriou A."/>
            <person name="Flores M."/>
            <person name="Liguori R."/>
            <person name="Vitale D."/>
            <person name="Mannhaupt G."/>
            <person name="Haase D."/>
            <person name="Schoof H."/>
            <person name="Rudd S."/>
            <person name="Zaccaria P."/>
            <person name="Mewes H.-W."/>
            <person name="Mayer K.F.X."/>
            <person name="Kaul S."/>
            <person name="Town C.D."/>
            <person name="Koo H.L."/>
            <person name="Tallon L.J."/>
            <person name="Jenkins J."/>
            <person name="Rooney T."/>
            <person name="Rizzo M."/>
            <person name="Walts A."/>
            <person name="Utterback T."/>
            <person name="Fujii C.Y."/>
            <person name="Shea T.P."/>
            <person name="Creasy T.H."/>
            <person name="Haas B."/>
            <person name="Maiti R."/>
            <person name="Wu D."/>
            <person name="Peterson J."/>
            <person name="Van Aken S."/>
            <person name="Pai G."/>
            <person name="Militscher J."/>
            <person name="Sellers P."/>
            <person name="Gill J.E."/>
            <person name="Feldblyum T.V."/>
            <person name="Preuss D."/>
            <person name="Lin X."/>
            <person name="Nierman W.C."/>
            <person name="Salzberg S.L."/>
            <person name="White O."/>
            <person name="Venter J.C."/>
            <person name="Fraser C.M."/>
            <person name="Kaneko T."/>
            <person name="Nakamura Y."/>
            <person name="Sato S."/>
            <person name="Kato T."/>
            <person name="Asamizu E."/>
            <person name="Sasamoto S."/>
            <person name="Kimura T."/>
            <person name="Idesawa K."/>
            <person name="Kawashima K."/>
            <person name="Kishida Y."/>
            <person name="Kiyokawa C."/>
            <person name="Kohara M."/>
            <person name="Matsumoto M."/>
            <person name="Matsuno A."/>
            <person name="Muraki A."/>
            <person name="Nakayama S."/>
            <person name="Nakazaki N."/>
            <person name="Shinpo S."/>
            <person name="Takeuchi C."/>
            <person name="Wada T."/>
            <person name="Watanabe A."/>
            <person name="Yamada M."/>
            <person name="Yasuda M."/>
            <person name="Tabata S."/>
        </authorList>
    </citation>
    <scope>NUCLEOTIDE SEQUENCE [LARGE SCALE GENOMIC DNA]</scope>
    <source>
        <strain>cv. Columbia</strain>
    </source>
</reference>
<reference key="2">
    <citation type="journal article" date="2017" name="Plant J.">
        <title>Araport11: a complete reannotation of the Arabidopsis thaliana reference genome.</title>
        <authorList>
            <person name="Cheng C.Y."/>
            <person name="Krishnakumar V."/>
            <person name="Chan A.P."/>
            <person name="Thibaud-Nissen F."/>
            <person name="Schobel S."/>
            <person name="Town C.D."/>
        </authorList>
    </citation>
    <scope>GENOME REANNOTATION</scope>
    <source>
        <strain>cv. Columbia</strain>
    </source>
</reference>
<reference key="3">
    <citation type="journal article" date="2003" name="Science">
        <title>Empirical analysis of transcriptional activity in the Arabidopsis genome.</title>
        <authorList>
            <person name="Yamada K."/>
            <person name="Lim J."/>
            <person name="Dale J.M."/>
            <person name="Chen H."/>
            <person name="Shinn P."/>
            <person name="Palm C.J."/>
            <person name="Southwick A.M."/>
            <person name="Wu H.C."/>
            <person name="Kim C.J."/>
            <person name="Nguyen M."/>
            <person name="Pham P.K."/>
            <person name="Cheuk R.F."/>
            <person name="Karlin-Newmann G."/>
            <person name="Liu S.X."/>
            <person name="Lam B."/>
            <person name="Sakano H."/>
            <person name="Wu T."/>
            <person name="Yu G."/>
            <person name="Miranda M."/>
            <person name="Quach H.L."/>
            <person name="Tripp M."/>
            <person name="Chang C.H."/>
            <person name="Lee J.M."/>
            <person name="Toriumi M.J."/>
            <person name="Chan M.M."/>
            <person name="Tang C.C."/>
            <person name="Onodera C.S."/>
            <person name="Deng J.M."/>
            <person name="Akiyama K."/>
            <person name="Ansari Y."/>
            <person name="Arakawa T."/>
            <person name="Banh J."/>
            <person name="Banno F."/>
            <person name="Bowser L."/>
            <person name="Brooks S.Y."/>
            <person name="Carninci P."/>
            <person name="Chao Q."/>
            <person name="Choy N."/>
            <person name="Enju A."/>
            <person name="Goldsmith A.D."/>
            <person name="Gurjal M."/>
            <person name="Hansen N.F."/>
            <person name="Hayashizaki Y."/>
            <person name="Johnson-Hopson C."/>
            <person name="Hsuan V.W."/>
            <person name="Iida K."/>
            <person name="Karnes M."/>
            <person name="Khan S."/>
            <person name="Koesema E."/>
            <person name="Ishida J."/>
            <person name="Jiang P.X."/>
            <person name="Jones T."/>
            <person name="Kawai J."/>
            <person name="Kamiya A."/>
            <person name="Meyers C."/>
            <person name="Nakajima M."/>
            <person name="Narusaka M."/>
            <person name="Seki M."/>
            <person name="Sakurai T."/>
            <person name="Satou M."/>
            <person name="Tamse R."/>
            <person name="Vaysberg M."/>
            <person name="Wallender E.K."/>
            <person name="Wong C."/>
            <person name="Yamamura Y."/>
            <person name="Yuan S."/>
            <person name="Shinozaki K."/>
            <person name="Davis R.W."/>
            <person name="Theologis A."/>
            <person name="Ecker J.R."/>
        </authorList>
    </citation>
    <scope>NUCLEOTIDE SEQUENCE [LARGE SCALE MRNA] (ISOFORM 2)</scope>
    <source>
        <strain>cv. Columbia</strain>
    </source>
</reference>
<reference key="4">
    <citation type="submission" date="2006-07" db="EMBL/GenBank/DDBJ databases">
        <title>Large-scale analysis of RIKEN Arabidopsis full-length (RAFL) cDNAs.</title>
        <authorList>
            <person name="Totoki Y."/>
            <person name="Seki M."/>
            <person name="Ishida J."/>
            <person name="Nakajima M."/>
            <person name="Enju A."/>
            <person name="Kamiya A."/>
            <person name="Narusaka M."/>
            <person name="Shin-i T."/>
            <person name="Nakagawa M."/>
            <person name="Sakamoto N."/>
            <person name="Oishi K."/>
            <person name="Kohara Y."/>
            <person name="Kobayashi M."/>
            <person name="Toyoda A."/>
            <person name="Sakaki Y."/>
            <person name="Sakurai T."/>
            <person name="Iida K."/>
            <person name="Akiyama K."/>
            <person name="Satou M."/>
            <person name="Toyoda T."/>
            <person name="Konagaya A."/>
            <person name="Carninci P."/>
            <person name="Kawai J."/>
            <person name="Hayashizaki Y."/>
            <person name="Shinozaki K."/>
        </authorList>
    </citation>
    <scope>NUCLEOTIDE SEQUENCE [LARGE SCALE MRNA] (ISOFORM 2)</scope>
    <source>
        <strain>cv. Columbia</strain>
    </source>
</reference>
<reference key="5">
    <citation type="submission" date="2009-03" db="EMBL/GenBank/DDBJ databases">
        <title>ORF cloning and analysis of Arabidopsis transcription factor genes.</title>
        <authorList>
            <person name="Fujita M."/>
            <person name="Mizukado S."/>
            <person name="Seki M."/>
            <person name="Shinozaki K."/>
            <person name="Mitsuda N."/>
            <person name="Takiguchi Y."/>
            <person name="Takagi M."/>
        </authorList>
    </citation>
    <scope>NUCLEOTIDE SEQUENCE [LARGE SCALE MRNA]</scope>
</reference>
<reference key="6">
    <citation type="journal article" date="2001" name="Nucleic Acids Res.">
        <title>The Arabidopsis thaliana genome contains at least 29 active genes encoding SET domain proteins that can be assigned to four evolutionarily conserved classes.</title>
        <authorList>
            <person name="Baumbusch L.O."/>
            <person name="Thorstensen T."/>
            <person name="Krauss V."/>
            <person name="Fischer A."/>
            <person name="Naumann K."/>
            <person name="Assalkhou R."/>
            <person name="Schulz I."/>
            <person name="Reuter G."/>
            <person name="Aalen R.B."/>
        </authorList>
    </citation>
    <scope>NOMENCLATURE</scope>
</reference>
<sequence length="354" mass="38773">MQRLRESPPPKTRCLGEASDIIPAADRFLRCANLILPWLNPRELAVVAQTCKTLSLISKSLTIHRSLDAARSLENISIPFHNSIDSQRYAYFIYTPFQIPASSPPPPRQWWGAAANECGSESRPCFDSVSESGRFGVSLVDESGCECERCEEGYCKCLAFAGMEEIANECGSGCGCGSDCSNRVTQKGVSVSLKIVRDEKKGWCLYADQLIKQGQFICEYAGELLTTDEARRRQNIYDKLRSTQSFASALLVVREHLPSGQACLRINIDATRIGNVARFINHSCDGGNLSTVLLRSSGALLPRLCFFAAKDIIAEEELSFSYGDVSVAGENRDDKLNCSCGSSCCLGTLPCENT</sequence>
<protein>
    <recommendedName>
        <fullName>Histone-lysine N-methyltransferase SUVR3</fullName>
        <ecNumber>2.1.1.-</ecNumber>
    </recommendedName>
    <alternativeName>
        <fullName>Protein SET DOMAIN GROUP 20</fullName>
    </alternativeName>
    <alternativeName>
        <fullName>Suppressor of variegation 3-9-related protein 3</fullName>
        <shortName>Su(var)3-9-related protein 3</shortName>
    </alternativeName>
</protein>
<accession>Q9SRV2</accession>
<accession>C0SV96</accession>
<accession>Q1HAZ4</accession>
<accession>Q7Y033</accession>